<dbReference type="SMR" id="P37204"/>
<dbReference type="GlyCosmos" id="P37204">
    <property type="glycosylation" value="2 sites, No reported glycans"/>
</dbReference>
<dbReference type="GO" id="GO:0005615">
    <property type="term" value="C:extracellular space"/>
    <property type="evidence" value="ECO:0000250"/>
    <property type="project" value="UniProtKB"/>
</dbReference>
<dbReference type="GO" id="GO:0016914">
    <property type="term" value="C:follicle-stimulating hormone complex"/>
    <property type="evidence" value="ECO:0000250"/>
    <property type="project" value="UniProtKB"/>
</dbReference>
<dbReference type="GO" id="GO:0016913">
    <property type="term" value="F:follicle-stimulating hormone activity"/>
    <property type="evidence" value="ECO:0000250"/>
    <property type="project" value="UniProtKB"/>
</dbReference>
<dbReference type="GO" id="GO:0007186">
    <property type="term" value="P:G protein-coupled receptor signaling pathway"/>
    <property type="evidence" value="ECO:0000250"/>
    <property type="project" value="UniProtKB"/>
</dbReference>
<dbReference type="GO" id="GO:0010893">
    <property type="term" value="P:positive regulation of steroid biosynthetic process"/>
    <property type="evidence" value="ECO:0000250"/>
    <property type="project" value="UniProtKB"/>
</dbReference>
<dbReference type="GO" id="GO:0010469">
    <property type="term" value="P:regulation of signaling receptor activity"/>
    <property type="evidence" value="ECO:0000250"/>
    <property type="project" value="UniProtKB"/>
</dbReference>
<dbReference type="GO" id="GO:0006590">
    <property type="term" value="P:thyroid hormone generation"/>
    <property type="evidence" value="ECO:0007669"/>
    <property type="project" value="TreeGrafter"/>
</dbReference>
<dbReference type="FunFam" id="2.10.90.10:FF:000011">
    <property type="entry name" value="Glycoprotein hormones alpha chain"/>
    <property type="match status" value="1"/>
</dbReference>
<dbReference type="Gene3D" id="2.10.90.10">
    <property type="entry name" value="Cystine-knot cytokines"/>
    <property type="match status" value="1"/>
</dbReference>
<dbReference type="InterPro" id="IPR029034">
    <property type="entry name" value="Cystine-knot_cytokine"/>
</dbReference>
<dbReference type="InterPro" id="IPR000476">
    <property type="entry name" value="Glyco_hormone"/>
</dbReference>
<dbReference type="PANTHER" id="PTHR11509">
    <property type="entry name" value="GLYCOPROTEIN HORMONE ALPHA CHAIN"/>
    <property type="match status" value="1"/>
</dbReference>
<dbReference type="PANTHER" id="PTHR11509:SF0">
    <property type="entry name" value="GLYCOPROTEIN HORMONES ALPHA CHAIN"/>
    <property type="match status" value="1"/>
</dbReference>
<dbReference type="Pfam" id="PF00236">
    <property type="entry name" value="Hormone_6"/>
    <property type="match status" value="1"/>
</dbReference>
<dbReference type="PRINTS" id="PR00274">
    <property type="entry name" value="GLYCOHORMONE"/>
</dbReference>
<dbReference type="SMART" id="SM00067">
    <property type="entry name" value="GHA"/>
    <property type="match status" value="1"/>
</dbReference>
<dbReference type="SUPFAM" id="SSF57501">
    <property type="entry name" value="Cystine-knot cytokines"/>
    <property type="match status" value="1"/>
</dbReference>
<dbReference type="PROSITE" id="PS00779">
    <property type="entry name" value="GLYCO_HORMONE_ALPHA_1"/>
    <property type="match status" value="1"/>
</dbReference>
<dbReference type="PROSITE" id="PS00780">
    <property type="entry name" value="GLYCO_HORMONE_ALPHA_2"/>
    <property type="match status" value="1"/>
</dbReference>
<dbReference type="PROSITE" id="PS50277">
    <property type="entry name" value="GLYCO_HORMONE_ALPHA_3"/>
    <property type="match status" value="1"/>
</dbReference>
<evidence type="ECO:0000250" key="1">
    <source>
        <dbReference type="UniProtKB" id="P01215"/>
    </source>
</evidence>
<evidence type="ECO:0000269" key="2">
    <source>
    </source>
</evidence>
<evidence type="ECO:0000305" key="3"/>
<evidence type="ECO:0000305" key="4">
    <source>
    </source>
</evidence>
<comment type="function">
    <text evidence="2">Shared alpha chain of heterodimeric glycoprotein hormones. These hormones bind specific receptors on target cells that in turn activate downstream signaling pathways. Involved in gametogenesis and steroidogenesis.</text>
</comment>
<comment type="subunit">
    <text evidence="2">Heterodimer. Glycoprotein hormones are heterodimers composed of a common alpha chain described here and a unique beta chain which confers their biological specificity to the different hormones.</text>
</comment>
<comment type="subcellular location">
    <subcellularLocation>
        <location evidence="4">Secreted</location>
    </subcellularLocation>
</comment>
<comment type="similarity">
    <text evidence="3">Belongs to the glycoprotein hormones subunit alpha family.</text>
</comment>
<reference key="1">
    <citation type="journal article" date="1994" name="Int. J. Pept. Protein Res.">
        <title>Purification and characterization of gonadotropin I and II from pituitary glands of tuna (Thunnus obesus).</title>
        <authorList>
            <person name="Okada T."/>
            <person name="Kawazoe I."/>
            <person name="Kimura S."/>
            <person name="Sasamoto Y."/>
            <person name="Aida K."/>
            <person name="Kawauchi H."/>
        </authorList>
    </citation>
    <scope>PROTEIN SEQUENCE</scope>
    <scope>FUNCTION</scope>
    <scope>SUBUNIT</scope>
    <source>
        <tissue>Pituitary</tissue>
    </source>
</reference>
<protein>
    <recommendedName>
        <fullName>Glycoprotein hormones alpha chain</fullName>
    </recommendedName>
    <alternativeName>
        <fullName>GTH-alpha</fullName>
    </alternativeName>
    <alternativeName>
        <fullName>Gonadotropin alpha chain</fullName>
    </alternativeName>
</protein>
<accession>P37204</accession>
<gene>
    <name type="primary">cga</name>
</gene>
<keyword id="KW-0903">Direct protein sequencing</keyword>
<keyword id="KW-1015">Disulfide bond</keyword>
<keyword id="KW-0325">Glycoprotein</keyword>
<keyword id="KW-0372">Hormone</keyword>
<keyword id="KW-0964">Secreted</keyword>
<feature type="chain" id="PRO_0000149034" description="Glycoprotein hormones alpha chain">
    <location>
        <begin position="1"/>
        <end position="94"/>
    </location>
</feature>
<feature type="glycosylation site" description="N-linked (GlcNAc...) asparagine" evidence="1">
    <location>
        <position position="55"/>
    </location>
</feature>
<feature type="glycosylation site" description="N-linked (GlcNAc...) asparagine" evidence="1">
    <location>
        <position position="80"/>
    </location>
</feature>
<feature type="disulfide bond" evidence="1">
    <location>
        <begin position="11"/>
        <end position="34"/>
    </location>
</feature>
<feature type="disulfide bond" evidence="1">
    <location>
        <begin position="14"/>
        <end position="63"/>
    </location>
</feature>
<feature type="disulfide bond" evidence="1">
    <location>
        <begin position="31"/>
        <end position="84"/>
    </location>
</feature>
<feature type="disulfide bond" evidence="1">
    <location>
        <begin position="35"/>
        <end position="86"/>
    </location>
</feature>
<feature type="disulfide bond" evidence="1">
    <location>
        <begin position="62"/>
        <end position="89"/>
    </location>
</feature>
<name>GLHA_THUOB</name>
<organism>
    <name type="scientific">Thunnus obesus</name>
    <name type="common">Bigeye tuna</name>
    <dbReference type="NCBI Taxonomy" id="8241"/>
    <lineage>
        <taxon>Eukaryota</taxon>
        <taxon>Metazoa</taxon>
        <taxon>Chordata</taxon>
        <taxon>Craniata</taxon>
        <taxon>Vertebrata</taxon>
        <taxon>Euteleostomi</taxon>
        <taxon>Actinopterygii</taxon>
        <taxon>Neopterygii</taxon>
        <taxon>Teleostei</taxon>
        <taxon>Neoteleostei</taxon>
        <taxon>Acanthomorphata</taxon>
        <taxon>Pelagiaria</taxon>
        <taxon>Scombriformes</taxon>
        <taxon>Scombridae</taxon>
        <taxon>Thunnus</taxon>
    </lineage>
</organism>
<sequence>YPNVDLSNMGCEECTLKKNNVFSRDRPIYQCMGCCFSRAFPTPLKAMKTMTIPKNITSEATCCVAKHSYETEVAGIRVRNHTDCHCSTCYFHKS</sequence>
<proteinExistence type="evidence at protein level"/>